<accession>Q12Q42</accession>
<keyword id="KW-1185">Reference proteome</keyword>
<keyword id="KW-0694">RNA-binding</keyword>
<keyword id="KW-0804">Transcription</keyword>
<keyword id="KW-0889">Transcription antitermination</keyword>
<keyword id="KW-0805">Transcription regulation</keyword>
<reference key="1">
    <citation type="submission" date="2006-03" db="EMBL/GenBank/DDBJ databases">
        <title>Complete sequence of Shewanella denitrificans OS217.</title>
        <authorList>
            <consortium name="US DOE Joint Genome Institute"/>
            <person name="Copeland A."/>
            <person name="Lucas S."/>
            <person name="Lapidus A."/>
            <person name="Barry K."/>
            <person name="Detter J.C."/>
            <person name="Glavina del Rio T."/>
            <person name="Hammon N."/>
            <person name="Israni S."/>
            <person name="Dalin E."/>
            <person name="Tice H."/>
            <person name="Pitluck S."/>
            <person name="Brettin T."/>
            <person name="Bruce D."/>
            <person name="Han C."/>
            <person name="Tapia R."/>
            <person name="Gilna P."/>
            <person name="Kiss H."/>
            <person name="Schmutz J."/>
            <person name="Larimer F."/>
            <person name="Land M."/>
            <person name="Hauser L."/>
            <person name="Kyrpides N."/>
            <person name="Lykidis A."/>
            <person name="Richardson P."/>
        </authorList>
    </citation>
    <scope>NUCLEOTIDE SEQUENCE [LARGE SCALE GENOMIC DNA]</scope>
    <source>
        <strain>OS217 / ATCC BAA-1090 / DSM 15013</strain>
    </source>
</reference>
<protein>
    <recommendedName>
        <fullName evidence="1">Transcription antitermination protein NusB</fullName>
    </recommendedName>
    <alternativeName>
        <fullName evidence="1">Antitermination factor NusB</fullName>
    </alternativeName>
</protein>
<feature type="chain" id="PRO_0000265588" description="Transcription antitermination protein NusB">
    <location>
        <begin position="1"/>
        <end position="133"/>
    </location>
</feature>
<sequence>MKPSERRKARRLAVQAIYSWQLSKNNVADVEHEFITEQNIDGVDVAYFRELLAGVASKHEQIDDLLRPHLDRKFEDVSPVEKAIVRLAGYELTFRKDVPYKVAINEAIELAKAFGADDSHKFVNGLLDKLVRR</sequence>
<gene>
    <name evidence="1" type="primary">nusB</name>
    <name type="ordered locus">Sden_1148</name>
</gene>
<evidence type="ECO:0000255" key="1">
    <source>
        <dbReference type="HAMAP-Rule" id="MF_00073"/>
    </source>
</evidence>
<proteinExistence type="inferred from homology"/>
<organism>
    <name type="scientific">Shewanella denitrificans (strain OS217 / ATCC BAA-1090 / DSM 15013)</name>
    <dbReference type="NCBI Taxonomy" id="318161"/>
    <lineage>
        <taxon>Bacteria</taxon>
        <taxon>Pseudomonadati</taxon>
        <taxon>Pseudomonadota</taxon>
        <taxon>Gammaproteobacteria</taxon>
        <taxon>Alteromonadales</taxon>
        <taxon>Shewanellaceae</taxon>
        <taxon>Shewanella</taxon>
    </lineage>
</organism>
<comment type="function">
    <text evidence="1">Involved in transcription antitermination. Required for transcription of ribosomal RNA (rRNA) genes. Binds specifically to the boxA antiterminator sequence of the ribosomal RNA (rrn) operons.</text>
</comment>
<comment type="similarity">
    <text evidence="1">Belongs to the NusB family.</text>
</comment>
<dbReference type="EMBL" id="CP000302">
    <property type="protein sequence ID" value="ABE54434.1"/>
    <property type="molecule type" value="Genomic_DNA"/>
</dbReference>
<dbReference type="RefSeq" id="WP_011495595.1">
    <property type="nucleotide sequence ID" value="NC_007954.1"/>
</dbReference>
<dbReference type="SMR" id="Q12Q42"/>
<dbReference type="STRING" id="318161.Sden_1148"/>
<dbReference type="KEGG" id="sdn:Sden_1148"/>
<dbReference type="eggNOG" id="COG0781">
    <property type="taxonomic scope" value="Bacteria"/>
</dbReference>
<dbReference type="HOGENOM" id="CLU_087843_4_1_6"/>
<dbReference type="OrthoDB" id="9789556at2"/>
<dbReference type="Proteomes" id="UP000001982">
    <property type="component" value="Chromosome"/>
</dbReference>
<dbReference type="GO" id="GO:0005829">
    <property type="term" value="C:cytosol"/>
    <property type="evidence" value="ECO:0007669"/>
    <property type="project" value="TreeGrafter"/>
</dbReference>
<dbReference type="GO" id="GO:0003723">
    <property type="term" value="F:RNA binding"/>
    <property type="evidence" value="ECO:0007669"/>
    <property type="project" value="UniProtKB-UniRule"/>
</dbReference>
<dbReference type="GO" id="GO:0006353">
    <property type="term" value="P:DNA-templated transcription termination"/>
    <property type="evidence" value="ECO:0007669"/>
    <property type="project" value="UniProtKB-UniRule"/>
</dbReference>
<dbReference type="GO" id="GO:0031564">
    <property type="term" value="P:transcription antitermination"/>
    <property type="evidence" value="ECO:0007669"/>
    <property type="project" value="UniProtKB-KW"/>
</dbReference>
<dbReference type="CDD" id="cd00619">
    <property type="entry name" value="Terminator_NusB"/>
    <property type="match status" value="1"/>
</dbReference>
<dbReference type="FunFam" id="1.10.940.10:FF:000001">
    <property type="entry name" value="Transcription antitermination factor NusB"/>
    <property type="match status" value="1"/>
</dbReference>
<dbReference type="Gene3D" id="1.10.940.10">
    <property type="entry name" value="NusB-like"/>
    <property type="match status" value="1"/>
</dbReference>
<dbReference type="HAMAP" id="MF_00073">
    <property type="entry name" value="NusB"/>
    <property type="match status" value="1"/>
</dbReference>
<dbReference type="InterPro" id="IPR035926">
    <property type="entry name" value="NusB-like_sf"/>
</dbReference>
<dbReference type="InterPro" id="IPR011605">
    <property type="entry name" value="NusB_fam"/>
</dbReference>
<dbReference type="InterPro" id="IPR006027">
    <property type="entry name" value="NusB_RsmB_TIM44"/>
</dbReference>
<dbReference type="NCBIfam" id="TIGR01951">
    <property type="entry name" value="nusB"/>
    <property type="match status" value="1"/>
</dbReference>
<dbReference type="PANTHER" id="PTHR11078:SF3">
    <property type="entry name" value="ANTITERMINATION NUSB DOMAIN-CONTAINING PROTEIN"/>
    <property type="match status" value="1"/>
</dbReference>
<dbReference type="PANTHER" id="PTHR11078">
    <property type="entry name" value="N UTILIZATION SUBSTANCE PROTEIN B-RELATED"/>
    <property type="match status" value="1"/>
</dbReference>
<dbReference type="Pfam" id="PF01029">
    <property type="entry name" value="NusB"/>
    <property type="match status" value="1"/>
</dbReference>
<dbReference type="SUPFAM" id="SSF48013">
    <property type="entry name" value="NusB-like"/>
    <property type="match status" value="1"/>
</dbReference>
<name>NUSB_SHEDO</name>